<evidence type="ECO:0000255" key="1">
    <source>
        <dbReference type="HAMAP-Rule" id="MF_01365"/>
    </source>
</evidence>
<evidence type="ECO:0000305" key="2"/>
<keyword id="KW-1185">Reference proteome</keyword>
<keyword id="KW-0687">Ribonucleoprotein</keyword>
<keyword id="KW-0689">Ribosomal protein</keyword>
<keyword id="KW-0694">RNA-binding</keyword>
<keyword id="KW-0699">rRNA-binding</keyword>
<comment type="function">
    <text evidence="1">This protein binds to the 23S rRNA, and is important in its secondary structure. It is located near the subunit interface in the base of the L7/L12 stalk, and near the tRNA binding site of the peptidyltransferase center.</text>
</comment>
<comment type="subunit">
    <text evidence="1">Part of the 50S ribosomal subunit.</text>
</comment>
<comment type="similarity">
    <text evidence="1">Belongs to the universal ribosomal protein uL6 family.</text>
</comment>
<name>RL6_HELHP</name>
<organism>
    <name type="scientific">Helicobacter hepaticus (strain ATCC 51449 / 3B1)</name>
    <dbReference type="NCBI Taxonomy" id="235279"/>
    <lineage>
        <taxon>Bacteria</taxon>
        <taxon>Pseudomonadati</taxon>
        <taxon>Campylobacterota</taxon>
        <taxon>Epsilonproteobacteria</taxon>
        <taxon>Campylobacterales</taxon>
        <taxon>Helicobacteraceae</taxon>
        <taxon>Helicobacter</taxon>
    </lineage>
</organism>
<sequence>MSRVGKKPINIPKGVEVSVQGSKILFKGAKEQKELETYGRVQIHLQDGTLSFACVDSQAQSRAYWGTYRALANNIIVGLSQGFTKVLEINGVGYKANISGKNLEMALGFSHPVIYPIPAGVEMSVDKNTITIKGADKQQIGQIAAEIRKFRPPEPYKGKGIKYSDEMIVRKAGKTSKK</sequence>
<reference key="1">
    <citation type="journal article" date="2003" name="Proc. Natl. Acad. Sci. U.S.A.">
        <title>The complete genome sequence of the carcinogenic bacterium Helicobacter hepaticus.</title>
        <authorList>
            <person name="Suerbaum S."/>
            <person name="Josenhans C."/>
            <person name="Sterzenbach T."/>
            <person name="Drescher B."/>
            <person name="Brandt P."/>
            <person name="Bell M."/>
            <person name="Droege M."/>
            <person name="Fartmann B."/>
            <person name="Fischer H.-P."/>
            <person name="Ge Z."/>
            <person name="Hoerster A."/>
            <person name="Holland R."/>
            <person name="Klein K."/>
            <person name="Koenig J."/>
            <person name="Macko L."/>
            <person name="Mendz G.L."/>
            <person name="Nyakatura G."/>
            <person name="Schauer D.B."/>
            <person name="Shen Z."/>
            <person name="Weber J."/>
            <person name="Frosch M."/>
            <person name="Fox J.G."/>
        </authorList>
    </citation>
    <scope>NUCLEOTIDE SEQUENCE [LARGE SCALE GENOMIC DNA]</scope>
    <source>
        <strain>ATCC 51449 / 3B1</strain>
    </source>
</reference>
<accession>Q7VGC9</accession>
<protein>
    <recommendedName>
        <fullName evidence="1">Large ribosomal subunit protein uL6</fullName>
    </recommendedName>
    <alternativeName>
        <fullName evidence="2">50S ribosomal protein L6</fullName>
    </alternativeName>
</protein>
<feature type="chain" id="PRO_0000265258" description="Large ribosomal subunit protein uL6">
    <location>
        <begin position="1"/>
        <end position="178"/>
    </location>
</feature>
<proteinExistence type="inferred from homology"/>
<dbReference type="EMBL" id="AE017125">
    <property type="protein sequence ID" value="AAP77990.1"/>
    <property type="molecule type" value="Genomic_DNA"/>
</dbReference>
<dbReference type="RefSeq" id="WP_011116233.1">
    <property type="nucleotide sequence ID" value="NC_004917.1"/>
</dbReference>
<dbReference type="SMR" id="Q7VGC9"/>
<dbReference type="STRING" id="235279.HH_1393"/>
<dbReference type="KEGG" id="hhe:HH_1393"/>
<dbReference type="eggNOG" id="COG0097">
    <property type="taxonomic scope" value="Bacteria"/>
</dbReference>
<dbReference type="HOGENOM" id="CLU_065464_1_2_7"/>
<dbReference type="OrthoDB" id="9805007at2"/>
<dbReference type="Proteomes" id="UP000002495">
    <property type="component" value="Chromosome"/>
</dbReference>
<dbReference type="GO" id="GO:0022625">
    <property type="term" value="C:cytosolic large ribosomal subunit"/>
    <property type="evidence" value="ECO:0007669"/>
    <property type="project" value="TreeGrafter"/>
</dbReference>
<dbReference type="GO" id="GO:0019843">
    <property type="term" value="F:rRNA binding"/>
    <property type="evidence" value="ECO:0007669"/>
    <property type="project" value="UniProtKB-UniRule"/>
</dbReference>
<dbReference type="GO" id="GO:0003735">
    <property type="term" value="F:structural constituent of ribosome"/>
    <property type="evidence" value="ECO:0007669"/>
    <property type="project" value="InterPro"/>
</dbReference>
<dbReference type="GO" id="GO:0002181">
    <property type="term" value="P:cytoplasmic translation"/>
    <property type="evidence" value="ECO:0007669"/>
    <property type="project" value="TreeGrafter"/>
</dbReference>
<dbReference type="FunFam" id="3.90.930.12:FF:000001">
    <property type="entry name" value="50S ribosomal protein L6"/>
    <property type="match status" value="1"/>
</dbReference>
<dbReference type="Gene3D" id="3.90.930.12">
    <property type="entry name" value="Ribosomal protein L6, alpha-beta domain"/>
    <property type="match status" value="2"/>
</dbReference>
<dbReference type="HAMAP" id="MF_01365_B">
    <property type="entry name" value="Ribosomal_uL6_B"/>
    <property type="match status" value="1"/>
</dbReference>
<dbReference type="InterPro" id="IPR000702">
    <property type="entry name" value="Ribosomal_uL6-like"/>
</dbReference>
<dbReference type="InterPro" id="IPR036789">
    <property type="entry name" value="Ribosomal_uL6-like_a/b-dom_sf"/>
</dbReference>
<dbReference type="InterPro" id="IPR020040">
    <property type="entry name" value="Ribosomal_uL6_a/b-dom"/>
</dbReference>
<dbReference type="InterPro" id="IPR019906">
    <property type="entry name" value="Ribosomal_uL6_bac-type"/>
</dbReference>
<dbReference type="InterPro" id="IPR002358">
    <property type="entry name" value="Ribosomal_uL6_CS"/>
</dbReference>
<dbReference type="NCBIfam" id="TIGR03654">
    <property type="entry name" value="L6_bact"/>
    <property type="match status" value="1"/>
</dbReference>
<dbReference type="PANTHER" id="PTHR11655">
    <property type="entry name" value="60S/50S RIBOSOMAL PROTEIN L6/L9"/>
    <property type="match status" value="1"/>
</dbReference>
<dbReference type="PANTHER" id="PTHR11655:SF14">
    <property type="entry name" value="LARGE RIBOSOMAL SUBUNIT PROTEIN UL6M"/>
    <property type="match status" value="1"/>
</dbReference>
<dbReference type="Pfam" id="PF00347">
    <property type="entry name" value="Ribosomal_L6"/>
    <property type="match status" value="2"/>
</dbReference>
<dbReference type="PIRSF" id="PIRSF002162">
    <property type="entry name" value="Ribosomal_L6"/>
    <property type="match status" value="1"/>
</dbReference>
<dbReference type="PRINTS" id="PR00059">
    <property type="entry name" value="RIBOSOMALL6"/>
</dbReference>
<dbReference type="SUPFAM" id="SSF56053">
    <property type="entry name" value="Ribosomal protein L6"/>
    <property type="match status" value="2"/>
</dbReference>
<dbReference type="PROSITE" id="PS00525">
    <property type="entry name" value="RIBOSOMAL_L6_1"/>
    <property type="match status" value="1"/>
</dbReference>
<gene>
    <name evidence="1" type="primary">rplF</name>
    <name type="ordered locus">HH_1393</name>
</gene>